<reference key="1">
    <citation type="journal article" date="2004" name="Proc. Natl. Acad. Sci. U.S.A.">
        <title>The complete genomic sequence of Nocardia farcinica IFM 10152.</title>
        <authorList>
            <person name="Ishikawa J."/>
            <person name="Yamashita A."/>
            <person name="Mikami Y."/>
            <person name="Hoshino Y."/>
            <person name="Kurita H."/>
            <person name="Hotta K."/>
            <person name="Shiba T."/>
            <person name="Hattori M."/>
        </authorList>
    </citation>
    <scope>NUCLEOTIDE SEQUENCE [LARGE SCALE GENOMIC DNA]</scope>
    <source>
        <strain>IFM 10152</strain>
    </source>
</reference>
<feature type="chain" id="PRO_0000229830" description="Phosphoribosyl-AMP cyclohydrolase">
    <location>
        <begin position="1"/>
        <end position="115"/>
    </location>
</feature>
<feature type="binding site" evidence="1">
    <location>
        <position position="80"/>
    </location>
    <ligand>
        <name>Mg(2+)</name>
        <dbReference type="ChEBI" id="CHEBI:18420"/>
    </ligand>
</feature>
<feature type="binding site" evidence="1">
    <location>
        <position position="81"/>
    </location>
    <ligand>
        <name>Zn(2+)</name>
        <dbReference type="ChEBI" id="CHEBI:29105"/>
        <note>ligand shared between dimeric partners</note>
    </ligand>
</feature>
<feature type="binding site" evidence="1">
    <location>
        <position position="82"/>
    </location>
    <ligand>
        <name>Mg(2+)</name>
        <dbReference type="ChEBI" id="CHEBI:18420"/>
    </ligand>
</feature>
<feature type="binding site" evidence="1">
    <location>
        <position position="84"/>
    </location>
    <ligand>
        <name>Mg(2+)</name>
        <dbReference type="ChEBI" id="CHEBI:18420"/>
    </ligand>
</feature>
<feature type="binding site" evidence="1">
    <location>
        <position position="97"/>
    </location>
    <ligand>
        <name>Zn(2+)</name>
        <dbReference type="ChEBI" id="CHEBI:29105"/>
        <note>ligand shared between dimeric partners</note>
    </ligand>
</feature>
<feature type="binding site" evidence="1">
    <location>
        <position position="104"/>
    </location>
    <ligand>
        <name>Zn(2+)</name>
        <dbReference type="ChEBI" id="CHEBI:29105"/>
        <note>ligand shared between dimeric partners</note>
    </ligand>
</feature>
<accession>Q5YYP1</accession>
<protein>
    <recommendedName>
        <fullName evidence="1">Phosphoribosyl-AMP cyclohydrolase</fullName>
        <shortName evidence="1">PRA-CH</shortName>
        <ecNumber evidence="1">3.5.4.19</ecNumber>
    </recommendedName>
</protein>
<comment type="function">
    <text evidence="1">Catalyzes the hydrolysis of the adenine ring of phosphoribosyl-AMP.</text>
</comment>
<comment type="catalytic activity">
    <reaction evidence="1">
        <text>1-(5-phospho-beta-D-ribosyl)-5'-AMP + H2O = 1-(5-phospho-beta-D-ribosyl)-5-[(5-phospho-beta-D-ribosylamino)methylideneamino]imidazole-4-carboxamide</text>
        <dbReference type="Rhea" id="RHEA:20049"/>
        <dbReference type="ChEBI" id="CHEBI:15377"/>
        <dbReference type="ChEBI" id="CHEBI:58435"/>
        <dbReference type="ChEBI" id="CHEBI:59457"/>
        <dbReference type="EC" id="3.5.4.19"/>
    </reaction>
</comment>
<comment type="cofactor">
    <cofactor evidence="1">
        <name>Mg(2+)</name>
        <dbReference type="ChEBI" id="CHEBI:18420"/>
    </cofactor>
    <text evidence="1">Binds 1 Mg(2+) ion per subunit.</text>
</comment>
<comment type="cofactor">
    <cofactor evidence="1">
        <name>Zn(2+)</name>
        <dbReference type="ChEBI" id="CHEBI:29105"/>
    </cofactor>
    <text evidence="1">Binds 1 zinc ion per subunit.</text>
</comment>
<comment type="pathway">
    <text evidence="1">Amino-acid biosynthesis; L-histidine biosynthesis; L-histidine from 5-phospho-alpha-D-ribose 1-diphosphate: step 3/9.</text>
</comment>
<comment type="subunit">
    <text evidence="1">Homodimer.</text>
</comment>
<comment type="subcellular location">
    <subcellularLocation>
        <location evidence="1">Cytoplasm</location>
    </subcellularLocation>
</comment>
<comment type="similarity">
    <text evidence="1">Belongs to the PRA-CH family.</text>
</comment>
<sequence length="115" mass="12637">MSLDPAIAARLKRNEAGLVAAVAQERATGDVLMMAWMDDEALARTLATRKATYYSRSRQQYWVKGETSGHTQYVHEVRLDCDGDTVLLIVDQEGAACHTGTHTCWDGDVLLAEPA</sequence>
<organism>
    <name type="scientific">Nocardia farcinica (strain IFM 10152)</name>
    <dbReference type="NCBI Taxonomy" id="247156"/>
    <lineage>
        <taxon>Bacteria</taxon>
        <taxon>Bacillati</taxon>
        <taxon>Actinomycetota</taxon>
        <taxon>Actinomycetes</taxon>
        <taxon>Mycobacteriales</taxon>
        <taxon>Nocardiaceae</taxon>
        <taxon>Nocardia</taxon>
    </lineage>
</organism>
<gene>
    <name evidence="1" type="primary">hisI</name>
    <name type="ordered locus">NFA_18540</name>
</gene>
<dbReference type="EC" id="3.5.4.19" evidence="1"/>
<dbReference type="EMBL" id="AP006618">
    <property type="protein sequence ID" value="BAD56700.1"/>
    <property type="molecule type" value="Genomic_DNA"/>
</dbReference>
<dbReference type="RefSeq" id="WP_011208385.1">
    <property type="nucleotide sequence ID" value="NC_006361.1"/>
</dbReference>
<dbReference type="SMR" id="Q5YYP1"/>
<dbReference type="STRING" id="247156.NFA_18540"/>
<dbReference type="GeneID" id="61132638"/>
<dbReference type="KEGG" id="nfa:NFA_18540"/>
<dbReference type="eggNOG" id="COG0139">
    <property type="taxonomic scope" value="Bacteria"/>
</dbReference>
<dbReference type="HOGENOM" id="CLU_048577_5_1_11"/>
<dbReference type="OrthoDB" id="9795769at2"/>
<dbReference type="UniPathway" id="UPA00031">
    <property type="reaction ID" value="UER00008"/>
</dbReference>
<dbReference type="Proteomes" id="UP000006820">
    <property type="component" value="Chromosome"/>
</dbReference>
<dbReference type="GO" id="GO:0005737">
    <property type="term" value="C:cytoplasm"/>
    <property type="evidence" value="ECO:0007669"/>
    <property type="project" value="UniProtKB-SubCell"/>
</dbReference>
<dbReference type="GO" id="GO:0000287">
    <property type="term" value="F:magnesium ion binding"/>
    <property type="evidence" value="ECO:0007669"/>
    <property type="project" value="UniProtKB-UniRule"/>
</dbReference>
<dbReference type="GO" id="GO:0004635">
    <property type="term" value="F:phosphoribosyl-AMP cyclohydrolase activity"/>
    <property type="evidence" value="ECO:0007669"/>
    <property type="project" value="UniProtKB-UniRule"/>
</dbReference>
<dbReference type="GO" id="GO:0008270">
    <property type="term" value="F:zinc ion binding"/>
    <property type="evidence" value="ECO:0007669"/>
    <property type="project" value="UniProtKB-UniRule"/>
</dbReference>
<dbReference type="GO" id="GO:0000105">
    <property type="term" value="P:L-histidine biosynthetic process"/>
    <property type="evidence" value="ECO:0007669"/>
    <property type="project" value="UniProtKB-UniRule"/>
</dbReference>
<dbReference type="FunFam" id="3.10.20.810:FF:000001">
    <property type="entry name" value="Histidine biosynthesis bifunctional protein HisIE"/>
    <property type="match status" value="1"/>
</dbReference>
<dbReference type="Gene3D" id="3.10.20.810">
    <property type="entry name" value="Phosphoribosyl-AMP cyclohydrolase"/>
    <property type="match status" value="1"/>
</dbReference>
<dbReference type="HAMAP" id="MF_01021">
    <property type="entry name" value="HisI"/>
    <property type="match status" value="1"/>
</dbReference>
<dbReference type="InterPro" id="IPR026660">
    <property type="entry name" value="PRA-CH"/>
</dbReference>
<dbReference type="InterPro" id="IPR002496">
    <property type="entry name" value="PRib_AMP_CycHydrolase_dom"/>
</dbReference>
<dbReference type="InterPro" id="IPR038019">
    <property type="entry name" value="PRib_AMP_CycHydrolase_sf"/>
</dbReference>
<dbReference type="NCBIfam" id="NF000768">
    <property type="entry name" value="PRK00051.1"/>
    <property type="match status" value="1"/>
</dbReference>
<dbReference type="PANTHER" id="PTHR42945">
    <property type="entry name" value="HISTIDINE BIOSYNTHESIS BIFUNCTIONAL PROTEIN"/>
    <property type="match status" value="1"/>
</dbReference>
<dbReference type="PANTHER" id="PTHR42945:SF11">
    <property type="entry name" value="PHOSPHORIBOSYL-AMP CYCLOHYDROLASE"/>
    <property type="match status" value="1"/>
</dbReference>
<dbReference type="Pfam" id="PF01502">
    <property type="entry name" value="PRA-CH"/>
    <property type="match status" value="1"/>
</dbReference>
<dbReference type="SUPFAM" id="SSF141734">
    <property type="entry name" value="HisI-like"/>
    <property type="match status" value="1"/>
</dbReference>
<evidence type="ECO:0000255" key="1">
    <source>
        <dbReference type="HAMAP-Rule" id="MF_01021"/>
    </source>
</evidence>
<name>HIS3_NOCFA</name>
<proteinExistence type="inferred from homology"/>
<keyword id="KW-0028">Amino-acid biosynthesis</keyword>
<keyword id="KW-0963">Cytoplasm</keyword>
<keyword id="KW-0368">Histidine biosynthesis</keyword>
<keyword id="KW-0378">Hydrolase</keyword>
<keyword id="KW-0460">Magnesium</keyword>
<keyword id="KW-0479">Metal-binding</keyword>
<keyword id="KW-1185">Reference proteome</keyword>
<keyword id="KW-0862">Zinc</keyword>